<comment type="function">
    <text evidence="1">Protease subunit of a proteasome-like degradation complex believed to be a general protein degrading machinery.</text>
</comment>
<comment type="catalytic activity">
    <reaction evidence="1">
        <text>ATP-dependent cleavage of peptide bonds with broad specificity.</text>
        <dbReference type="EC" id="3.4.25.2"/>
    </reaction>
</comment>
<comment type="activity regulation">
    <text evidence="1">Allosterically activated by HslU binding.</text>
</comment>
<comment type="subunit">
    <text evidence="1">A double ring-shaped homohexamer of HslV is capped on each side by a ring-shaped HslU homohexamer. The assembly of the HslU/HslV complex is dependent on binding of ATP.</text>
</comment>
<comment type="subcellular location">
    <subcellularLocation>
        <location evidence="1">Cytoplasm</location>
    </subcellularLocation>
</comment>
<comment type="similarity">
    <text evidence="1">Belongs to the peptidase T1B family. HslV subfamily.</text>
</comment>
<keyword id="KW-0021">Allosteric enzyme</keyword>
<keyword id="KW-0963">Cytoplasm</keyword>
<keyword id="KW-0378">Hydrolase</keyword>
<keyword id="KW-0479">Metal-binding</keyword>
<keyword id="KW-0645">Protease</keyword>
<keyword id="KW-0915">Sodium</keyword>
<keyword id="KW-0888">Threonine protease</keyword>
<dbReference type="EC" id="3.4.25.2" evidence="1"/>
<dbReference type="EMBL" id="CP001657">
    <property type="protein sequence ID" value="ACT11227.1"/>
    <property type="molecule type" value="Genomic_DNA"/>
</dbReference>
<dbReference type="RefSeq" id="WP_005973334.1">
    <property type="nucleotide sequence ID" value="NC_012917.1"/>
</dbReference>
<dbReference type="SMR" id="C6DHM7"/>
<dbReference type="STRING" id="561230.PC1_0166"/>
<dbReference type="MEROPS" id="T01.006"/>
<dbReference type="GeneID" id="90761468"/>
<dbReference type="KEGG" id="pct:PC1_0166"/>
<dbReference type="eggNOG" id="COG5405">
    <property type="taxonomic scope" value="Bacteria"/>
</dbReference>
<dbReference type="HOGENOM" id="CLU_093872_1_0_6"/>
<dbReference type="OrthoDB" id="9804884at2"/>
<dbReference type="Proteomes" id="UP000002736">
    <property type="component" value="Chromosome"/>
</dbReference>
<dbReference type="GO" id="GO:0009376">
    <property type="term" value="C:HslUV protease complex"/>
    <property type="evidence" value="ECO:0007669"/>
    <property type="project" value="UniProtKB-UniRule"/>
</dbReference>
<dbReference type="GO" id="GO:0005839">
    <property type="term" value="C:proteasome core complex"/>
    <property type="evidence" value="ECO:0007669"/>
    <property type="project" value="InterPro"/>
</dbReference>
<dbReference type="GO" id="GO:0046872">
    <property type="term" value="F:metal ion binding"/>
    <property type="evidence" value="ECO:0007669"/>
    <property type="project" value="UniProtKB-KW"/>
</dbReference>
<dbReference type="GO" id="GO:0004298">
    <property type="term" value="F:threonine-type endopeptidase activity"/>
    <property type="evidence" value="ECO:0007669"/>
    <property type="project" value="UniProtKB-KW"/>
</dbReference>
<dbReference type="GO" id="GO:0051603">
    <property type="term" value="P:proteolysis involved in protein catabolic process"/>
    <property type="evidence" value="ECO:0007669"/>
    <property type="project" value="InterPro"/>
</dbReference>
<dbReference type="CDD" id="cd01913">
    <property type="entry name" value="protease_HslV"/>
    <property type="match status" value="1"/>
</dbReference>
<dbReference type="FunFam" id="3.60.20.10:FF:000002">
    <property type="entry name" value="ATP-dependent protease subunit HslV"/>
    <property type="match status" value="1"/>
</dbReference>
<dbReference type="Gene3D" id="3.60.20.10">
    <property type="entry name" value="Glutamine Phosphoribosylpyrophosphate, subunit 1, domain 1"/>
    <property type="match status" value="1"/>
</dbReference>
<dbReference type="HAMAP" id="MF_00248">
    <property type="entry name" value="HslV"/>
    <property type="match status" value="1"/>
</dbReference>
<dbReference type="InterPro" id="IPR022281">
    <property type="entry name" value="ATP-dep_Prtase_HsIV_su"/>
</dbReference>
<dbReference type="InterPro" id="IPR029055">
    <property type="entry name" value="Ntn_hydrolases_N"/>
</dbReference>
<dbReference type="InterPro" id="IPR001353">
    <property type="entry name" value="Proteasome_sua/b"/>
</dbReference>
<dbReference type="InterPro" id="IPR023333">
    <property type="entry name" value="Proteasome_suB-type"/>
</dbReference>
<dbReference type="NCBIfam" id="TIGR03692">
    <property type="entry name" value="ATP_dep_HslV"/>
    <property type="match status" value="1"/>
</dbReference>
<dbReference type="NCBIfam" id="NF003964">
    <property type="entry name" value="PRK05456.1"/>
    <property type="match status" value="1"/>
</dbReference>
<dbReference type="PANTHER" id="PTHR32194:SF0">
    <property type="entry name" value="ATP-DEPENDENT PROTEASE SUBUNIT HSLV"/>
    <property type="match status" value="1"/>
</dbReference>
<dbReference type="PANTHER" id="PTHR32194">
    <property type="entry name" value="METALLOPROTEASE TLDD"/>
    <property type="match status" value="1"/>
</dbReference>
<dbReference type="Pfam" id="PF00227">
    <property type="entry name" value="Proteasome"/>
    <property type="match status" value="1"/>
</dbReference>
<dbReference type="PIRSF" id="PIRSF039093">
    <property type="entry name" value="HslV"/>
    <property type="match status" value="1"/>
</dbReference>
<dbReference type="SUPFAM" id="SSF56235">
    <property type="entry name" value="N-terminal nucleophile aminohydrolases (Ntn hydrolases)"/>
    <property type="match status" value="1"/>
</dbReference>
<dbReference type="PROSITE" id="PS51476">
    <property type="entry name" value="PROTEASOME_BETA_2"/>
    <property type="match status" value="1"/>
</dbReference>
<gene>
    <name evidence="1" type="primary">hslV</name>
    <name type="ordered locus">PC1_0166</name>
</gene>
<protein>
    <recommendedName>
        <fullName evidence="1">ATP-dependent protease subunit HslV</fullName>
        <ecNumber evidence="1">3.4.25.2</ecNumber>
    </recommendedName>
</protein>
<reference key="1">
    <citation type="submission" date="2009-07" db="EMBL/GenBank/DDBJ databases">
        <title>Complete sequence of Pectobacterium carotovorum subsp. carotovorum PC1.</title>
        <authorList>
            <consortium name="US DOE Joint Genome Institute"/>
            <person name="Lucas S."/>
            <person name="Copeland A."/>
            <person name="Lapidus A."/>
            <person name="Glavina del Rio T."/>
            <person name="Tice H."/>
            <person name="Bruce D."/>
            <person name="Goodwin L."/>
            <person name="Pitluck S."/>
            <person name="Munk A.C."/>
            <person name="Brettin T."/>
            <person name="Detter J.C."/>
            <person name="Han C."/>
            <person name="Tapia R."/>
            <person name="Larimer F."/>
            <person name="Land M."/>
            <person name="Hauser L."/>
            <person name="Kyrpides N."/>
            <person name="Mikhailova N."/>
            <person name="Balakrishnan V."/>
            <person name="Glasner J."/>
            <person name="Perna N.T."/>
        </authorList>
    </citation>
    <scope>NUCLEOTIDE SEQUENCE [LARGE SCALE GENOMIC DNA]</scope>
    <source>
        <strain>PC1</strain>
    </source>
</reference>
<sequence>MTTIVSVRRNGQVVIGGDGQATLGNTVMKGNVRKVRRLYHDRVIAGFAGGTADAFTLFELFERKLELHQGHLVKAAVELAKDWRTDRMLRKLEALLAVADENASLIITGNGDVVQPENDLIAIGSGGPYAQAAARALLENTELGARDIVEKSLGIAGDICIYTNQFHTIEELASKA</sequence>
<proteinExistence type="inferred from homology"/>
<organism>
    <name type="scientific">Pectobacterium carotovorum subsp. carotovorum (strain PC1)</name>
    <dbReference type="NCBI Taxonomy" id="561230"/>
    <lineage>
        <taxon>Bacteria</taxon>
        <taxon>Pseudomonadati</taxon>
        <taxon>Pseudomonadota</taxon>
        <taxon>Gammaproteobacteria</taxon>
        <taxon>Enterobacterales</taxon>
        <taxon>Pectobacteriaceae</taxon>
        <taxon>Pectobacterium</taxon>
    </lineage>
</organism>
<accession>C6DHM7</accession>
<evidence type="ECO:0000255" key="1">
    <source>
        <dbReference type="HAMAP-Rule" id="MF_00248"/>
    </source>
</evidence>
<name>HSLV_PECCP</name>
<feature type="chain" id="PRO_1000204511" description="ATP-dependent protease subunit HslV">
    <location>
        <begin position="1"/>
        <end position="176"/>
    </location>
</feature>
<feature type="active site" evidence="1">
    <location>
        <position position="2"/>
    </location>
</feature>
<feature type="binding site" evidence="1">
    <location>
        <position position="157"/>
    </location>
    <ligand>
        <name>Na(+)</name>
        <dbReference type="ChEBI" id="CHEBI:29101"/>
    </ligand>
</feature>
<feature type="binding site" evidence="1">
    <location>
        <position position="160"/>
    </location>
    <ligand>
        <name>Na(+)</name>
        <dbReference type="ChEBI" id="CHEBI:29101"/>
    </ligand>
</feature>
<feature type="binding site" evidence="1">
    <location>
        <position position="163"/>
    </location>
    <ligand>
        <name>Na(+)</name>
        <dbReference type="ChEBI" id="CHEBI:29101"/>
    </ligand>
</feature>